<organism>
    <name type="scientific">Felis catus</name>
    <name type="common">Cat</name>
    <name type="synonym">Felis silvestris catus</name>
    <dbReference type="NCBI Taxonomy" id="9685"/>
    <lineage>
        <taxon>Eukaryota</taxon>
        <taxon>Metazoa</taxon>
        <taxon>Chordata</taxon>
        <taxon>Craniata</taxon>
        <taxon>Vertebrata</taxon>
        <taxon>Euteleostomi</taxon>
        <taxon>Mammalia</taxon>
        <taxon>Eutheria</taxon>
        <taxon>Laurasiatheria</taxon>
        <taxon>Carnivora</taxon>
        <taxon>Feliformia</taxon>
        <taxon>Felidae</taxon>
        <taxon>Felinae</taxon>
        <taxon>Felis</taxon>
    </lineage>
</organism>
<comment type="function">
    <text>Produced by macrophages, IFN-alpha have antiviral activities. Interferon stimulates the production of two enzymes: a protein kinase and an oligoadenylate synthetase.</text>
</comment>
<comment type="subcellular location">
    <subcellularLocation>
        <location>Secreted</location>
    </subcellularLocation>
</comment>
<comment type="pharmaceutical">
    <text evidence="3">Available under the names Virbagen Omega and Intercat. Used in veterinary medicine to treat canine parvovirus, feline leukemia virus and feline immunodeficiency virus infections.</text>
</comment>
<comment type="similarity">
    <text evidence="3">Belongs to the alpha/beta interferon family.</text>
</comment>
<feature type="signal peptide" evidence="1">
    <location>
        <begin position="1"/>
        <end position="23"/>
    </location>
</feature>
<feature type="chain" id="PRO_0000016394" description="Interferon alpha">
    <location>
        <begin position="24"/>
        <end position="194"/>
    </location>
</feature>
<feature type="glycosylation site" description="N-linked (GlcNAc...) asparagine" evidence="2">
    <location>
        <position position="102"/>
    </location>
</feature>
<feature type="disulfide bond" evidence="1">
    <location>
        <begin position="24"/>
        <end position="123"/>
    </location>
</feature>
<feature type="disulfide bond" evidence="1">
    <location>
        <begin position="52"/>
        <end position="166"/>
    </location>
</feature>
<feature type="sequence conflict" description="In Ref. 2; AAB27160." evidence="3" ref="2">
    <original>S</original>
    <variation>V</variation>
    <location>
        <position position="21"/>
    </location>
</feature>
<dbReference type="EMBL" id="S62636">
    <property type="protein sequence ID" value="AAB27160.2"/>
    <property type="molecule type" value="mRNA"/>
</dbReference>
<dbReference type="PIR" id="JS0664">
    <property type="entry name" value="JS0664"/>
</dbReference>
<dbReference type="RefSeq" id="NP_001009197.3">
    <property type="nucleotide sequence ID" value="NM_001009197.3"/>
</dbReference>
<dbReference type="SMR" id="P35849"/>
<dbReference type="FunCoup" id="P35849">
    <property type="interactions" value="46"/>
</dbReference>
<dbReference type="STRING" id="9685.ENSFCAP00000032900"/>
<dbReference type="PaxDb" id="9685-ENSFCAP00000016988"/>
<dbReference type="Ensembl" id="ENSFCAT00000038547.2">
    <property type="protein sequence ID" value="ENSFCAP00000032900.2"/>
    <property type="gene ID" value="ENSFCAG00000046651.1"/>
</dbReference>
<dbReference type="GeneID" id="493653"/>
<dbReference type="KEGG" id="fca:493653"/>
<dbReference type="CTD" id="3444"/>
<dbReference type="eggNOG" id="ENOG502SQAC">
    <property type="taxonomic scope" value="Eukaryota"/>
</dbReference>
<dbReference type="GeneTree" id="ENSGT01000000214430"/>
<dbReference type="HOGENOM" id="CLU_109427_0_0_1"/>
<dbReference type="InParanoid" id="P35849"/>
<dbReference type="OMA" id="RYDFRFP"/>
<dbReference type="OrthoDB" id="9728491at2759"/>
<dbReference type="Proteomes" id="UP000011712">
    <property type="component" value="Chromosome D4"/>
</dbReference>
<dbReference type="GO" id="GO:0005615">
    <property type="term" value="C:extracellular space"/>
    <property type="evidence" value="ECO:0000318"/>
    <property type="project" value="GO_Central"/>
</dbReference>
<dbReference type="GO" id="GO:0005125">
    <property type="term" value="F:cytokine activity"/>
    <property type="evidence" value="ECO:0000318"/>
    <property type="project" value="GO_Central"/>
</dbReference>
<dbReference type="GO" id="GO:0005132">
    <property type="term" value="F:type I interferon receptor binding"/>
    <property type="evidence" value="ECO:0000318"/>
    <property type="project" value="GO_Central"/>
</dbReference>
<dbReference type="GO" id="GO:0002250">
    <property type="term" value="P:adaptive immune response"/>
    <property type="evidence" value="ECO:0000318"/>
    <property type="project" value="GO_Central"/>
</dbReference>
<dbReference type="GO" id="GO:0002312">
    <property type="term" value="P:B cell activation involved in immune response"/>
    <property type="evidence" value="ECO:0000318"/>
    <property type="project" value="GO_Central"/>
</dbReference>
<dbReference type="GO" id="GO:0051607">
    <property type="term" value="P:defense response to virus"/>
    <property type="evidence" value="ECO:0007669"/>
    <property type="project" value="UniProtKB-KW"/>
</dbReference>
<dbReference type="GO" id="GO:0006959">
    <property type="term" value="P:humoral immune response"/>
    <property type="evidence" value="ECO:0000318"/>
    <property type="project" value="GO_Central"/>
</dbReference>
<dbReference type="GO" id="GO:0002323">
    <property type="term" value="P:natural killer cell activation involved in immune response"/>
    <property type="evidence" value="ECO:0000318"/>
    <property type="project" value="GO_Central"/>
</dbReference>
<dbReference type="GO" id="GO:0043330">
    <property type="term" value="P:response to exogenous dsRNA"/>
    <property type="evidence" value="ECO:0000318"/>
    <property type="project" value="GO_Central"/>
</dbReference>
<dbReference type="GO" id="GO:0002286">
    <property type="term" value="P:T cell activation involved in immune response"/>
    <property type="evidence" value="ECO:0000318"/>
    <property type="project" value="GO_Central"/>
</dbReference>
<dbReference type="GO" id="GO:0060337">
    <property type="term" value="P:type I interferon-mediated signaling pathway"/>
    <property type="evidence" value="ECO:0000318"/>
    <property type="project" value="GO_Central"/>
</dbReference>
<dbReference type="CDD" id="cd00095">
    <property type="entry name" value="IFab"/>
    <property type="match status" value="1"/>
</dbReference>
<dbReference type="FunFam" id="1.20.1250.10:FF:000001">
    <property type="entry name" value="Interferon alpha"/>
    <property type="match status" value="1"/>
</dbReference>
<dbReference type="Gene3D" id="1.20.1250.10">
    <property type="match status" value="1"/>
</dbReference>
<dbReference type="InterPro" id="IPR009079">
    <property type="entry name" value="4_helix_cytokine-like_core"/>
</dbReference>
<dbReference type="InterPro" id="IPR000471">
    <property type="entry name" value="Interferon_alpha/beta/delta"/>
</dbReference>
<dbReference type="PANTHER" id="PTHR11691:SF60">
    <property type="entry name" value="INTERFERON ALPHA-5"/>
    <property type="match status" value="1"/>
</dbReference>
<dbReference type="PANTHER" id="PTHR11691">
    <property type="entry name" value="TYPE I INTERFERON"/>
    <property type="match status" value="1"/>
</dbReference>
<dbReference type="Pfam" id="PF00143">
    <property type="entry name" value="Interferon"/>
    <property type="match status" value="1"/>
</dbReference>
<dbReference type="PRINTS" id="PR00266">
    <property type="entry name" value="INTERFERONAB"/>
</dbReference>
<dbReference type="SMART" id="SM00076">
    <property type="entry name" value="IFabd"/>
    <property type="match status" value="1"/>
</dbReference>
<dbReference type="SUPFAM" id="SSF47266">
    <property type="entry name" value="4-helical cytokines"/>
    <property type="match status" value="1"/>
</dbReference>
<dbReference type="PROSITE" id="PS00252">
    <property type="entry name" value="INTERFERON_A_B_D"/>
    <property type="match status" value="1"/>
</dbReference>
<accession>P35849</accession>
<accession>Q28831</accession>
<keyword id="KW-0051">Antiviral defense</keyword>
<keyword id="KW-0202">Cytokine</keyword>
<keyword id="KW-1015">Disulfide bond</keyword>
<keyword id="KW-0325">Glycoprotein</keyword>
<keyword id="KW-0582">Pharmaceutical</keyword>
<keyword id="KW-1185">Reference proteome</keyword>
<keyword id="KW-0964">Secreted</keyword>
<keyword id="KW-0732">Signal</keyword>
<reference key="1">
    <citation type="journal article" date="1992" name="Biosci. Biotechnol. Biochem.">
        <title>Molecular cloning of feline interferon cDNA by direct expression.</title>
        <authorList>
            <person name="Nakamura N."/>
            <person name="Sudo T."/>
            <person name="Matsuda S."/>
            <person name="Yanai A."/>
        </authorList>
    </citation>
    <scope>NUCLEOTIDE SEQUENCE [MRNA]</scope>
</reference>
<reference key="2">
    <citation type="journal article" date="1993" name="J. Vet. Med. Sci.">
        <title>Homogeneous production of feline interferon in silkworm by replacing single amino acid code in signal peptide region in recombinant baculovirus and characterization of the product.</title>
        <authorList>
            <person name="Ueda Y."/>
            <person name="Sakurai T."/>
            <person name="Yanai A."/>
        </authorList>
    </citation>
    <scope>NUCLEOTIDE SEQUENCE [MRNA] OF 1-193</scope>
</reference>
<proteinExistence type="evidence at transcript level"/>
<name>IFNA_FELCA</name>
<sequence length="194" mass="21892">MALPSSFLVALVALGCNSVCSLGCDLPQTHGLLNRRALTLLGQMRRLPASSCQKDRNDFAFPQDVFGGDQSHKAQALSVVHVTNQKIFHFFCTEASSSAAWNTTLLEEFCTGLDRQLTRLEACVLQEVEEGEAPLTNEDIHPEDSILRNYFQRLSLYLQEKKYSPCAWEIVRAEIMRSLYYSSTALQKRLRSEK</sequence>
<protein>
    <recommendedName>
        <fullName>Interferon alpha</fullName>
        <shortName>IFN-alpha</shortName>
    </recommendedName>
</protein>
<evidence type="ECO:0000250" key="1"/>
<evidence type="ECO:0000255" key="2"/>
<evidence type="ECO:0000305" key="3"/>